<protein>
    <recommendedName>
        <fullName evidence="1">Transcription elongation factor GreA</fullName>
    </recommendedName>
    <alternativeName>
        <fullName evidence="1">Transcript cleavage factor GreA</fullName>
    </alternativeName>
</protein>
<proteinExistence type="inferred from homology"/>
<gene>
    <name evidence="1" type="primary">greA</name>
    <name type="ordered locus">CLB_3594</name>
</gene>
<dbReference type="EMBL" id="CP000726">
    <property type="protein sequence ID" value="ABS35284.1"/>
    <property type="molecule type" value="Genomic_DNA"/>
</dbReference>
<dbReference type="RefSeq" id="WP_012048372.1">
    <property type="nucleotide sequence ID" value="NC_009697.1"/>
</dbReference>
<dbReference type="SMR" id="A7FZA6"/>
<dbReference type="GeneID" id="5187697"/>
<dbReference type="KEGG" id="cba:CLB_3594"/>
<dbReference type="HOGENOM" id="CLU_101379_2_1_9"/>
<dbReference type="GO" id="GO:0003677">
    <property type="term" value="F:DNA binding"/>
    <property type="evidence" value="ECO:0007669"/>
    <property type="project" value="UniProtKB-UniRule"/>
</dbReference>
<dbReference type="GO" id="GO:0070063">
    <property type="term" value="F:RNA polymerase binding"/>
    <property type="evidence" value="ECO:0007669"/>
    <property type="project" value="InterPro"/>
</dbReference>
<dbReference type="GO" id="GO:0006354">
    <property type="term" value="P:DNA-templated transcription elongation"/>
    <property type="evidence" value="ECO:0007669"/>
    <property type="project" value="TreeGrafter"/>
</dbReference>
<dbReference type="GO" id="GO:0032784">
    <property type="term" value="P:regulation of DNA-templated transcription elongation"/>
    <property type="evidence" value="ECO:0007669"/>
    <property type="project" value="UniProtKB-UniRule"/>
</dbReference>
<dbReference type="FunFam" id="1.10.287.180:FF:000001">
    <property type="entry name" value="Transcription elongation factor GreA"/>
    <property type="match status" value="1"/>
</dbReference>
<dbReference type="FunFam" id="3.10.50.30:FF:000001">
    <property type="entry name" value="Transcription elongation factor GreA"/>
    <property type="match status" value="1"/>
</dbReference>
<dbReference type="Gene3D" id="3.10.50.30">
    <property type="entry name" value="Transcription elongation factor, GreA/GreB, C-terminal domain"/>
    <property type="match status" value="1"/>
</dbReference>
<dbReference type="Gene3D" id="1.10.287.180">
    <property type="entry name" value="Transcription elongation factor, GreA/GreB, N-terminal domain"/>
    <property type="match status" value="1"/>
</dbReference>
<dbReference type="HAMAP" id="MF_00105">
    <property type="entry name" value="GreA_GreB"/>
    <property type="match status" value="1"/>
</dbReference>
<dbReference type="InterPro" id="IPR036953">
    <property type="entry name" value="GreA/GreB_C_sf"/>
</dbReference>
<dbReference type="InterPro" id="IPR018151">
    <property type="entry name" value="TF_GreA/GreB_CS"/>
</dbReference>
<dbReference type="InterPro" id="IPR006359">
    <property type="entry name" value="Tscrpt_elong_fac_GreA"/>
</dbReference>
<dbReference type="InterPro" id="IPR028624">
    <property type="entry name" value="Tscrpt_elong_fac_GreA/B"/>
</dbReference>
<dbReference type="InterPro" id="IPR001437">
    <property type="entry name" value="Tscrpt_elong_fac_GreA/B_C"/>
</dbReference>
<dbReference type="InterPro" id="IPR023459">
    <property type="entry name" value="Tscrpt_elong_fac_GreA/B_fam"/>
</dbReference>
<dbReference type="InterPro" id="IPR022691">
    <property type="entry name" value="Tscrpt_elong_fac_GreA/B_N"/>
</dbReference>
<dbReference type="InterPro" id="IPR036805">
    <property type="entry name" value="Tscrpt_elong_fac_GreA/B_N_sf"/>
</dbReference>
<dbReference type="NCBIfam" id="TIGR01462">
    <property type="entry name" value="greA"/>
    <property type="match status" value="1"/>
</dbReference>
<dbReference type="NCBIfam" id="NF001261">
    <property type="entry name" value="PRK00226.1-2"/>
    <property type="match status" value="1"/>
</dbReference>
<dbReference type="NCBIfam" id="NF001263">
    <property type="entry name" value="PRK00226.1-4"/>
    <property type="match status" value="1"/>
</dbReference>
<dbReference type="PANTHER" id="PTHR30437">
    <property type="entry name" value="TRANSCRIPTION ELONGATION FACTOR GREA"/>
    <property type="match status" value="1"/>
</dbReference>
<dbReference type="PANTHER" id="PTHR30437:SF4">
    <property type="entry name" value="TRANSCRIPTION ELONGATION FACTOR GREA"/>
    <property type="match status" value="1"/>
</dbReference>
<dbReference type="Pfam" id="PF01272">
    <property type="entry name" value="GreA_GreB"/>
    <property type="match status" value="1"/>
</dbReference>
<dbReference type="Pfam" id="PF03449">
    <property type="entry name" value="GreA_GreB_N"/>
    <property type="match status" value="1"/>
</dbReference>
<dbReference type="PIRSF" id="PIRSF006092">
    <property type="entry name" value="GreA_GreB"/>
    <property type="match status" value="1"/>
</dbReference>
<dbReference type="SUPFAM" id="SSF54534">
    <property type="entry name" value="FKBP-like"/>
    <property type="match status" value="1"/>
</dbReference>
<dbReference type="SUPFAM" id="SSF46557">
    <property type="entry name" value="GreA transcript cleavage protein, N-terminal domain"/>
    <property type="match status" value="1"/>
</dbReference>
<dbReference type="PROSITE" id="PS00829">
    <property type="entry name" value="GREAB_1"/>
    <property type="match status" value="1"/>
</dbReference>
<dbReference type="PROSITE" id="PS00830">
    <property type="entry name" value="GREAB_2"/>
    <property type="match status" value="1"/>
</dbReference>
<organism>
    <name type="scientific">Clostridium botulinum (strain ATCC 19397 / Type A)</name>
    <dbReference type="NCBI Taxonomy" id="441770"/>
    <lineage>
        <taxon>Bacteria</taxon>
        <taxon>Bacillati</taxon>
        <taxon>Bacillota</taxon>
        <taxon>Clostridia</taxon>
        <taxon>Eubacteriales</taxon>
        <taxon>Clostridiaceae</taxon>
        <taxon>Clostridium</taxon>
    </lineage>
</organism>
<evidence type="ECO:0000255" key="1">
    <source>
        <dbReference type="HAMAP-Rule" id="MF_00105"/>
    </source>
</evidence>
<reference key="1">
    <citation type="journal article" date="2007" name="PLoS ONE">
        <title>Analysis of the neurotoxin complex genes in Clostridium botulinum A1-A4 and B1 strains: BoNT/A3, /Ba4 and /B1 clusters are located within plasmids.</title>
        <authorList>
            <person name="Smith T.J."/>
            <person name="Hill K.K."/>
            <person name="Foley B.T."/>
            <person name="Detter J.C."/>
            <person name="Munk A.C."/>
            <person name="Bruce D.C."/>
            <person name="Doggett N.A."/>
            <person name="Smith L.A."/>
            <person name="Marks J.D."/>
            <person name="Xie G."/>
            <person name="Brettin T.S."/>
        </authorList>
    </citation>
    <scope>NUCLEOTIDE SEQUENCE [LARGE SCALE GENOMIC DNA]</scope>
    <source>
        <strain>ATCC 19397 / Type A</strain>
    </source>
</reference>
<accession>A7FZA6</accession>
<sequence length="160" mass="17874">MSEAKKYVMTYEGVKKLEEELEFLKTVKRKEITEKIKVALSFGDLSENSEYDEAKNEQAFVEGRIIQLENMLKNASIVDENEVPKDVVSVGSIVKVKDYEFDEEVEYIIVGSAEADPMNNKISNESPVGHGLIGKKAGDIIEVAVPDGVSKYEILEVNRA</sequence>
<name>GREA_CLOB1</name>
<keyword id="KW-0175">Coiled coil</keyword>
<keyword id="KW-0238">DNA-binding</keyword>
<keyword id="KW-0804">Transcription</keyword>
<keyword id="KW-0805">Transcription regulation</keyword>
<comment type="function">
    <text evidence="1">Necessary for efficient RNA polymerase transcription elongation past template-encoded arresting sites. The arresting sites in DNA have the property of trapping a certain fraction of elongating RNA polymerases that pass through, resulting in locked ternary complexes. Cleavage of the nascent transcript by cleavage factors such as GreA or GreB allows the resumption of elongation from the new 3'terminus. GreA releases sequences of 2 to 3 nucleotides.</text>
</comment>
<comment type="similarity">
    <text evidence="1">Belongs to the GreA/GreB family.</text>
</comment>
<feature type="chain" id="PRO_1000094158" description="Transcription elongation factor GreA">
    <location>
        <begin position="1"/>
        <end position="160"/>
    </location>
</feature>
<feature type="coiled-coil region" evidence="1">
    <location>
        <begin position="12"/>
        <end position="76"/>
    </location>
</feature>